<gene>
    <name type="primary">SIF2</name>
    <name type="synonym">EMB1</name>
    <name type="ordered locus">YBR103W</name>
    <name type="ORF">YBR0832</name>
</gene>
<keyword id="KW-0002">3D-structure</keyword>
<keyword id="KW-0156">Chromatin regulator</keyword>
<keyword id="KW-0539">Nucleus</keyword>
<keyword id="KW-0597">Phosphoprotein</keyword>
<keyword id="KW-1185">Reference proteome</keyword>
<keyword id="KW-0677">Repeat</keyword>
<keyword id="KW-0853">WD repeat</keyword>
<dbReference type="EMBL" id="X78993">
    <property type="protein sequence ID" value="CAA55606.1"/>
    <property type="molecule type" value="Genomic_DNA"/>
</dbReference>
<dbReference type="EMBL" id="Z35972">
    <property type="protein sequence ID" value="CAA85058.1"/>
    <property type="molecule type" value="Genomic_DNA"/>
</dbReference>
<dbReference type="EMBL" id="AY693053">
    <property type="protein sequence ID" value="AAT93072.1"/>
    <property type="molecule type" value="Genomic_DNA"/>
</dbReference>
<dbReference type="EMBL" id="BK006936">
    <property type="protein sequence ID" value="DAA07222.1"/>
    <property type="molecule type" value="Genomic_DNA"/>
</dbReference>
<dbReference type="PIR" id="S48268">
    <property type="entry name" value="S48268"/>
</dbReference>
<dbReference type="RefSeq" id="NP_009661.1">
    <property type="nucleotide sequence ID" value="NM_001178451.1"/>
</dbReference>
<dbReference type="PDB" id="1R5M">
    <property type="method" value="X-ray"/>
    <property type="resolution" value="1.55 A"/>
    <property type="chains" value="A=113-535"/>
</dbReference>
<dbReference type="PDBsum" id="1R5M"/>
<dbReference type="SMR" id="P38262"/>
<dbReference type="BioGRID" id="32807">
    <property type="interactions" value="499"/>
</dbReference>
<dbReference type="ComplexPortal" id="CPX-1342">
    <property type="entry name" value="SET3C histone deacetylase complex"/>
</dbReference>
<dbReference type="DIP" id="DIP-1377N"/>
<dbReference type="FunCoup" id="P38262">
    <property type="interactions" value="716"/>
</dbReference>
<dbReference type="IntAct" id="P38262">
    <property type="interactions" value="35"/>
</dbReference>
<dbReference type="MINT" id="P38262"/>
<dbReference type="STRING" id="4932.YBR103W"/>
<dbReference type="iPTMnet" id="P38262"/>
<dbReference type="PaxDb" id="4932-YBR103W"/>
<dbReference type="PeptideAtlas" id="P38262"/>
<dbReference type="EnsemblFungi" id="YBR103W_mRNA">
    <property type="protein sequence ID" value="YBR103W"/>
    <property type="gene ID" value="YBR103W"/>
</dbReference>
<dbReference type="GeneID" id="852399"/>
<dbReference type="KEGG" id="sce:YBR103W"/>
<dbReference type="AGR" id="SGD:S000000307"/>
<dbReference type="SGD" id="S000000307">
    <property type="gene designation" value="SIF2"/>
</dbReference>
<dbReference type="VEuPathDB" id="FungiDB:YBR103W"/>
<dbReference type="eggNOG" id="KOG0273">
    <property type="taxonomic scope" value="Eukaryota"/>
</dbReference>
<dbReference type="GeneTree" id="ENSGT00940000153421"/>
<dbReference type="HOGENOM" id="CLU_007609_1_1_1"/>
<dbReference type="InParanoid" id="P38262"/>
<dbReference type="OMA" id="KWNKCGN"/>
<dbReference type="OrthoDB" id="1367865at2759"/>
<dbReference type="BioCyc" id="YEAST:G3O-29065-MONOMER"/>
<dbReference type="Reactome" id="R-SCE-3214815">
    <property type="pathway name" value="HDACs deacetylate histones"/>
</dbReference>
<dbReference type="BioGRID-ORCS" id="852399">
    <property type="hits" value="0 hits in 10 CRISPR screens"/>
</dbReference>
<dbReference type="EvolutionaryTrace" id="P38262"/>
<dbReference type="PRO" id="PR:P38262"/>
<dbReference type="Proteomes" id="UP000002311">
    <property type="component" value="Chromosome II"/>
</dbReference>
<dbReference type="RNAct" id="P38262">
    <property type="molecule type" value="protein"/>
</dbReference>
<dbReference type="GO" id="GO:0005634">
    <property type="term" value="C:nucleus"/>
    <property type="evidence" value="ECO:0000314"/>
    <property type="project" value="ComplexPortal"/>
</dbReference>
<dbReference type="GO" id="GO:0070210">
    <property type="term" value="C:Rpd3L-Expanded complex"/>
    <property type="evidence" value="ECO:0007005"/>
    <property type="project" value="SGD"/>
</dbReference>
<dbReference type="GO" id="GO:0034967">
    <property type="term" value="C:Set3 complex"/>
    <property type="evidence" value="ECO:0000314"/>
    <property type="project" value="SGD"/>
</dbReference>
<dbReference type="GO" id="GO:0003714">
    <property type="term" value="F:transcription corepressor activity"/>
    <property type="evidence" value="ECO:0000318"/>
    <property type="project" value="GO_Central"/>
</dbReference>
<dbReference type="GO" id="GO:0009267">
    <property type="term" value="P:cellular response to starvation"/>
    <property type="evidence" value="ECO:0000303"/>
    <property type="project" value="ComplexPortal"/>
</dbReference>
<dbReference type="GO" id="GO:0006325">
    <property type="term" value="P:chromatin organization"/>
    <property type="evidence" value="ECO:0007669"/>
    <property type="project" value="UniProtKB-KW"/>
</dbReference>
<dbReference type="GO" id="GO:0006974">
    <property type="term" value="P:DNA damage response"/>
    <property type="evidence" value="ECO:0000303"/>
    <property type="project" value="ComplexPortal"/>
</dbReference>
<dbReference type="GO" id="GO:0045835">
    <property type="term" value="P:negative regulation of meiotic nuclear division"/>
    <property type="evidence" value="ECO:0000314"/>
    <property type="project" value="ComplexPortal"/>
</dbReference>
<dbReference type="GO" id="GO:0032874">
    <property type="term" value="P:positive regulation of stress-activated MAPK cascade"/>
    <property type="evidence" value="ECO:0000315"/>
    <property type="project" value="SGD"/>
</dbReference>
<dbReference type="GO" id="GO:0006355">
    <property type="term" value="P:regulation of DNA-templated transcription"/>
    <property type="evidence" value="ECO:0000315"/>
    <property type="project" value="SGD"/>
</dbReference>
<dbReference type="GO" id="GO:0006357">
    <property type="term" value="P:regulation of transcription by RNA polymerase II"/>
    <property type="evidence" value="ECO:0000318"/>
    <property type="project" value="GO_Central"/>
</dbReference>
<dbReference type="FunFam" id="1.20.960.30:FF:000001">
    <property type="entry name" value="F-box-like/WD repeat-containing protein TBL1XR1"/>
    <property type="match status" value="1"/>
</dbReference>
<dbReference type="FunFam" id="2.130.10.10:FF:001159">
    <property type="entry name" value="SIR4-interacting protein SIF2"/>
    <property type="match status" value="1"/>
</dbReference>
<dbReference type="Gene3D" id="1.20.960.30">
    <property type="match status" value="1"/>
</dbReference>
<dbReference type="Gene3D" id="2.130.10.10">
    <property type="entry name" value="YVTN repeat-like/Quinoprotein amine dehydrogenase"/>
    <property type="match status" value="1"/>
</dbReference>
<dbReference type="InterPro" id="IPR024977">
    <property type="entry name" value="Apc4-like_WD40_dom"/>
</dbReference>
<dbReference type="InterPro" id="IPR045183">
    <property type="entry name" value="Ebi-like"/>
</dbReference>
<dbReference type="InterPro" id="IPR006594">
    <property type="entry name" value="LisH"/>
</dbReference>
<dbReference type="InterPro" id="IPR015943">
    <property type="entry name" value="WD40/YVTN_repeat-like_dom_sf"/>
</dbReference>
<dbReference type="InterPro" id="IPR036322">
    <property type="entry name" value="WD40_repeat_dom_sf"/>
</dbReference>
<dbReference type="InterPro" id="IPR001680">
    <property type="entry name" value="WD40_rpt"/>
</dbReference>
<dbReference type="PANTHER" id="PTHR22846:SF2">
    <property type="entry name" value="F-BOX-LIKE_WD REPEAT-CONTAINING PROTEIN EBI"/>
    <property type="match status" value="1"/>
</dbReference>
<dbReference type="PANTHER" id="PTHR22846">
    <property type="entry name" value="WD40 REPEAT PROTEIN"/>
    <property type="match status" value="1"/>
</dbReference>
<dbReference type="Pfam" id="PF12894">
    <property type="entry name" value="ANAPC4_WD40"/>
    <property type="match status" value="1"/>
</dbReference>
<dbReference type="Pfam" id="PF08513">
    <property type="entry name" value="LisH"/>
    <property type="match status" value="1"/>
</dbReference>
<dbReference type="Pfam" id="PF00400">
    <property type="entry name" value="WD40"/>
    <property type="match status" value="2"/>
</dbReference>
<dbReference type="SMART" id="SM00667">
    <property type="entry name" value="LisH"/>
    <property type="match status" value="1"/>
</dbReference>
<dbReference type="SMART" id="SM00320">
    <property type="entry name" value="WD40"/>
    <property type="match status" value="5"/>
</dbReference>
<dbReference type="SUPFAM" id="SSF50978">
    <property type="entry name" value="WD40 repeat-like"/>
    <property type="match status" value="1"/>
</dbReference>
<dbReference type="PROSITE" id="PS50896">
    <property type="entry name" value="LISH"/>
    <property type="match status" value="1"/>
</dbReference>
<dbReference type="PROSITE" id="PS50082">
    <property type="entry name" value="WD_REPEATS_2"/>
    <property type="match status" value="4"/>
</dbReference>
<dbReference type="PROSITE" id="PS50294">
    <property type="entry name" value="WD_REPEATS_REGION"/>
    <property type="match status" value="1"/>
</dbReference>
<organism>
    <name type="scientific">Saccharomyces cerevisiae (strain ATCC 204508 / S288c)</name>
    <name type="common">Baker's yeast</name>
    <dbReference type="NCBI Taxonomy" id="559292"/>
    <lineage>
        <taxon>Eukaryota</taxon>
        <taxon>Fungi</taxon>
        <taxon>Dikarya</taxon>
        <taxon>Ascomycota</taxon>
        <taxon>Saccharomycotina</taxon>
        <taxon>Saccharomycetes</taxon>
        <taxon>Saccharomycetales</taxon>
        <taxon>Saccharomycetaceae</taxon>
        <taxon>Saccharomyces</taxon>
    </lineage>
</organism>
<evidence type="ECO:0000255" key="1">
    <source>
        <dbReference type="PROSITE-ProRule" id="PRU00126"/>
    </source>
</evidence>
<evidence type="ECO:0000256" key="2">
    <source>
        <dbReference type="SAM" id="MobiDB-lite"/>
    </source>
</evidence>
<evidence type="ECO:0000269" key="3">
    <source>
    </source>
</evidence>
<evidence type="ECO:0000269" key="4">
    <source>
    </source>
</evidence>
<evidence type="ECO:0000269" key="5">
    <source>
    </source>
</evidence>
<evidence type="ECO:0000305" key="6"/>
<evidence type="ECO:0007744" key="7">
    <source>
    </source>
</evidence>
<evidence type="ECO:0007744" key="8">
    <source>
    </source>
</evidence>
<evidence type="ECO:0007829" key="9">
    <source>
        <dbReference type="PDB" id="1R5M"/>
    </source>
</evidence>
<accession>P38262</accession>
<accession>D6VQA2</accession>
<sequence length="535" mass="59161">MSITSEELNYLIWRYCQEMGHEVSALALQDETRVLEFDEKYKEHIPLGTLVNLVQRGILYTESELMVDSKGDISALNEHHLSEDFNLVQALQIDKEKFPEISSEGRFTLETNSESNKAGEDGASTVERETQEDDTNSIDSSDDLDGFVKILKEIVKLDNIVSSTWNPLDESILAYGEKNSVARLARIVETDQEGKKYWKLTIIAELRHPFALSASSGKTTNQVTCLAWSHDGNSIVTGVENGELRLWNKTGALLNVLNFHRAPIVSVKWNKDGTHIISMDVENVTILWNVISGTVMQHFELKETGGSSINAENHSGDGSLGVDVEWVDDDKFVIPGPKGAIFVYQITEKTPTGKLIGHHGPISVLEFNDTNKLLLSASDDGTLRIWHGGNGNSQNCFYGHSQSIVSASWVGDDKVISCSMDGSVRLWSLKQNTLLALSIVDGVPIFAGRISQDGQKYAVAFMDGQVNVYDLKKLNSKSRSLYGNRDGILNPLPIPLYASYQSSQDNDYIFDLSWNCAGNKISVAYSLQEGSVVAI</sequence>
<proteinExistence type="evidence at protein level"/>
<comment type="function">
    <text>Antagonizes telomeric silencing in yeast. May recruit SIR4 to non-telomeric sites or repression.</text>
</comment>
<comment type="subunit">
    <text evidence="3 5">Homotetramer. Interacts with SIR4 N-terminal domain. Interacts with a complex composed of SIN3 and RPD3. Identified in the Set3C complex with HOS2, HST1, SNT1, CPR1, HOS4/YIL112W and SET3.</text>
</comment>
<comment type="interaction">
    <interactant intactId="EBI-17136">
        <id>P38262</id>
    </interactant>
    <interactant intactId="EBI-8492">
        <id>P40480</id>
        <label>HOS4</label>
    </interactant>
    <organismsDiffer>false</organismsDiffer>
    <experiments>6</experiments>
</comment>
<comment type="interaction">
    <interactant intactId="EBI-17136">
        <id>P38262</id>
    </interactant>
    <interactant intactId="EBI-8691">
        <id>P53685</id>
        <label>HST1</label>
    </interactant>
    <organismsDiffer>false</organismsDiffer>
    <experiments>2</experiments>
</comment>
<comment type="subcellular location">
    <subcellularLocation>
        <location>Nucleus</location>
    </subcellularLocation>
</comment>
<comment type="domain">
    <text evidence="5">The LisH domain mediates tetramerization and interaction with SNT1.</text>
</comment>
<comment type="miscellaneous">
    <text evidence="4">Present with 1620 molecules/cell in log phase SD medium.</text>
</comment>
<reference key="1">
    <citation type="journal article" date="1994" name="Yeast">
        <title>Analysis of a 70 kb region on the right arm of yeast chromosome II.</title>
        <authorList>
            <person name="Mannhaupt G."/>
            <person name="Stucka R."/>
            <person name="Ehnle S."/>
            <person name="Vetter I."/>
            <person name="Feldmann H."/>
        </authorList>
    </citation>
    <scope>NUCLEOTIDE SEQUENCE [GENOMIC DNA]</scope>
    <source>
        <strain>ATCC 204508 / S288c</strain>
    </source>
</reference>
<reference key="2">
    <citation type="journal article" date="1994" name="EMBO J.">
        <title>Complete DNA sequence of yeast chromosome II.</title>
        <authorList>
            <person name="Feldmann H."/>
            <person name="Aigle M."/>
            <person name="Aljinovic G."/>
            <person name="Andre B."/>
            <person name="Baclet M.C."/>
            <person name="Barthe C."/>
            <person name="Baur A."/>
            <person name="Becam A.-M."/>
            <person name="Biteau N."/>
            <person name="Boles E."/>
            <person name="Brandt T."/>
            <person name="Brendel M."/>
            <person name="Brueckner M."/>
            <person name="Bussereau F."/>
            <person name="Christiansen C."/>
            <person name="Contreras R."/>
            <person name="Crouzet M."/>
            <person name="Cziepluch C."/>
            <person name="Demolis N."/>
            <person name="Delaveau T."/>
            <person name="Doignon F."/>
            <person name="Domdey H."/>
            <person name="Duesterhus S."/>
            <person name="Dubois E."/>
            <person name="Dujon B."/>
            <person name="El Bakkoury M."/>
            <person name="Entian K.-D."/>
            <person name="Feuermann M."/>
            <person name="Fiers W."/>
            <person name="Fobo G.M."/>
            <person name="Fritz C."/>
            <person name="Gassenhuber J."/>
            <person name="Glansdorff N."/>
            <person name="Goffeau A."/>
            <person name="Grivell L.A."/>
            <person name="de Haan M."/>
            <person name="Hein C."/>
            <person name="Herbert C.J."/>
            <person name="Hollenberg C.P."/>
            <person name="Holmstroem K."/>
            <person name="Jacq C."/>
            <person name="Jacquet M."/>
            <person name="Jauniaux J.-C."/>
            <person name="Jonniaux J.-L."/>
            <person name="Kallesoee T."/>
            <person name="Kiesau P."/>
            <person name="Kirchrath L."/>
            <person name="Koetter P."/>
            <person name="Korol S."/>
            <person name="Liebl S."/>
            <person name="Logghe M."/>
            <person name="Lohan A.J.E."/>
            <person name="Louis E.J."/>
            <person name="Li Z.Y."/>
            <person name="Maat M.J."/>
            <person name="Mallet L."/>
            <person name="Mannhaupt G."/>
            <person name="Messenguy F."/>
            <person name="Miosga T."/>
            <person name="Molemans F."/>
            <person name="Mueller S."/>
            <person name="Nasr F."/>
            <person name="Obermaier B."/>
            <person name="Perea J."/>
            <person name="Pierard A."/>
            <person name="Piravandi E."/>
            <person name="Pohl F.M."/>
            <person name="Pohl T.M."/>
            <person name="Potier S."/>
            <person name="Proft M."/>
            <person name="Purnelle B."/>
            <person name="Ramezani Rad M."/>
            <person name="Rieger M."/>
            <person name="Rose M."/>
            <person name="Schaaff-Gerstenschlaeger I."/>
            <person name="Scherens B."/>
            <person name="Schwarzlose C."/>
            <person name="Skala J."/>
            <person name="Slonimski P.P."/>
            <person name="Smits P.H.M."/>
            <person name="Souciet J.-L."/>
            <person name="Steensma H.Y."/>
            <person name="Stucka R."/>
            <person name="Urrestarazu L.A."/>
            <person name="van der Aart Q.J.M."/>
            <person name="Van Dyck L."/>
            <person name="Vassarotti A."/>
            <person name="Vetter I."/>
            <person name="Vierendeels F."/>
            <person name="Vissers S."/>
            <person name="Wagner G."/>
            <person name="de Wergifosse P."/>
            <person name="Wolfe K.H."/>
            <person name="Zagulski M."/>
            <person name="Zimmermann F.K."/>
            <person name="Mewes H.-W."/>
            <person name="Kleine K."/>
        </authorList>
    </citation>
    <scope>NUCLEOTIDE SEQUENCE [LARGE SCALE GENOMIC DNA]</scope>
    <source>
        <strain>ATCC 204508 / S288c</strain>
    </source>
</reference>
<reference key="3">
    <citation type="journal article" date="2014" name="G3 (Bethesda)">
        <title>The reference genome sequence of Saccharomyces cerevisiae: Then and now.</title>
        <authorList>
            <person name="Engel S.R."/>
            <person name="Dietrich F.S."/>
            <person name="Fisk D.G."/>
            <person name="Binkley G."/>
            <person name="Balakrishnan R."/>
            <person name="Costanzo M.C."/>
            <person name="Dwight S.S."/>
            <person name="Hitz B.C."/>
            <person name="Karra K."/>
            <person name="Nash R.S."/>
            <person name="Weng S."/>
            <person name="Wong E.D."/>
            <person name="Lloyd P."/>
            <person name="Skrzypek M.S."/>
            <person name="Miyasato S.R."/>
            <person name="Simison M."/>
            <person name="Cherry J.M."/>
        </authorList>
    </citation>
    <scope>GENOME REANNOTATION</scope>
    <source>
        <strain>ATCC 204508 / S288c</strain>
    </source>
</reference>
<reference key="4">
    <citation type="journal article" date="2007" name="Genome Res.">
        <title>Approaching a complete repository of sequence-verified protein-encoding clones for Saccharomyces cerevisiae.</title>
        <authorList>
            <person name="Hu Y."/>
            <person name="Rolfs A."/>
            <person name="Bhullar B."/>
            <person name="Murthy T.V.S."/>
            <person name="Zhu C."/>
            <person name="Berger M.F."/>
            <person name="Camargo A.A."/>
            <person name="Kelley F."/>
            <person name="McCarron S."/>
            <person name="Jepson D."/>
            <person name="Richardson A."/>
            <person name="Raphael J."/>
            <person name="Moreira D."/>
            <person name="Taycher E."/>
            <person name="Zuo D."/>
            <person name="Mohr S."/>
            <person name="Kane M.F."/>
            <person name="Williamson J."/>
            <person name="Simpson A.J.G."/>
            <person name="Bulyk M.L."/>
            <person name="Harlow E."/>
            <person name="Marsischky G."/>
            <person name="Kolodner R.D."/>
            <person name="LaBaer J."/>
        </authorList>
    </citation>
    <scope>NUCLEOTIDE SEQUENCE [GENOMIC DNA]</scope>
    <source>
        <strain>ATCC 204508 / S288c</strain>
    </source>
</reference>
<reference key="5">
    <citation type="journal article" date="1998" name="Curr. Biol.">
        <title>Sif2p interacts with Sir4p amino-terminal domain and antagonizes telomeric silencing in yeast.</title>
        <authorList>
            <person name="Cockell M."/>
            <person name="Renauld H."/>
            <person name="Watt P."/>
            <person name="Gasser S.M."/>
        </authorList>
    </citation>
    <scope>CHARACTERIZATION</scope>
</reference>
<reference key="6">
    <citation type="journal article" date="2001" name="Genes Dev.">
        <title>The S. cerevisiae SET3 complex includes two histone deacetylases, Hos2 and Hst1, and is a meiotic-specific repressor of the sporulation gene program.</title>
        <authorList>
            <person name="Pijnappel W.W.M.P."/>
            <person name="Schaft D."/>
            <person name="Roguev A."/>
            <person name="Shevchenko A."/>
            <person name="Tekotte H."/>
            <person name="Wilm M."/>
            <person name="Rigaut G."/>
            <person name="Seraphin B."/>
            <person name="Aasland R."/>
            <person name="Stewart A.F."/>
        </authorList>
    </citation>
    <scope>IDENTIFICATION IN A COMPLEX WITH HOS2; HST1; SNT1; CPR1; YIL112W AND SET3</scope>
</reference>
<reference key="7">
    <citation type="journal article" date="2003" name="Nature">
        <title>Global analysis of protein expression in yeast.</title>
        <authorList>
            <person name="Ghaemmaghami S."/>
            <person name="Huh W.-K."/>
            <person name="Bower K."/>
            <person name="Howson R.W."/>
            <person name="Belle A."/>
            <person name="Dephoure N."/>
            <person name="O'Shea E.K."/>
            <person name="Weissman J.S."/>
        </authorList>
    </citation>
    <scope>LEVEL OF PROTEIN EXPRESSION [LARGE SCALE ANALYSIS]</scope>
</reference>
<reference key="8">
    <citation type="journal article" date="2007" name="J. Proteome Res.">
        <title>Large-scale phosphorylation analysis of alpha-factor-arrested Saccharomyces cerevisiae.</title>
        <authorList>
            <person name="Li X."/>
            <person name="Gerber S.A."/>
            <person name="Rudner A.D."/>
            <person name="Beausoleil S.A."/>
            <person name="Haas W."/>
            <person name="Villen J."/>
            <person name="Elias J.E."/>
            <person name="Gygi S.P."/>
        </authorList>
    </citation>
    <scope>PHOSPHORYLATION [LARGE SCALE ANALYSIS] AT SER-137</scope>
    <scope>IDENTIFICATION BY MASS SPECTROMETRY [LARGE SCALE ANALYSIS]</scope>
    <source>
        <strain>ADR376</strain>
    </source>
</reference>
<reference key="9">
    <citation type="journal article" date="2008" name="Mol. Cell. Proteomics">
        <title>A multidimensional chromatography technology for in-depth phosphoproteome analysis.</title>
        <authorList>
            <person name="Albuquerque C.P."/>
            <person name="Smolka M.B."/>
            <person name="Payne S.H."/>
            <person name="Bafna V."/>
            <person name="Eng J."/>
            <person name="Zhou H."/>
        </authorList>
    </citation>
    <scope>IDENTIFICATION BY MASS SPECTROMETRY [LARGE SCALE ANALYSIS]</scope>
</reference>
<reference key="10">
    <citation type="journal article" date="2009" name="Science">
        <title>Global analysis of Cdk1 substrate phosphorylation sites provides insights into evolution.</title>
        <authorList>
            <person name="Holt L.J."/>
            <person name="Tuch B.B."/>
            <person name="Villen J."/>
            <person name="Johnson A.D."/>
            <person name="Gygi S.P."/>
            <person name="Morgan D.O."/>
        </authorList>
    </citation>
    <scope>PHOSPHORYLATION [LARGE SCALE ANALYSIS] AT SER-137</scope>
    <scope>IDENTIFICATION BY MASS SPECTROMETRY [LARGE SCALE ANALYSIS]</scope>
</reference>
<reference key="11">
    <citation type="journal article" date="2005" name="J. Mol. Biol.">
        <title>The structure of Sif2p, a WD repeat protein functioning in the SET3 corepressor complex.</title>
        <authorList>
            <person name="Cerna D."/>
            <person name="Wilson D.K."/>
        </authorList>
    </citation>
    <scope>X-RAY CRYSTALLOGRAPHY (1.55 ANGSTROMS) OF 113-535</scope>
    <scope>SUBUNIT</scope>
    <scope>DOMAINS WD REPEATS</scope>
</reference>
<protein>
    <recommendedName>
        <fullName>SIR4-interacting protein SIF2</fullName>
    </recommendedName>
</protein>
<feature type="chain" id="PRO_0000051216" description="SIR4-interacting protein SIF2">
    <location>
        <begin position="1"/>
        <end position="535"/>
    </location>
</feature>
<feature type="domain" description="LisH" evidence="1">
    <location>
        <begin position="4"/>
        <end position="36"/>
    </location>
</feature>
<feature type="repeat" description="WD 1">
    <location>
        <begin position="155"/>
        <end position="186"/>
    </location>
</feature>
<feature type="repeat" description="WD 2">
    <location>
        <begin position="218"/>
        <end position="248"/>
    </location>
</feature>
<feature type="repeat" description="WD 3">
    <location>
        <begin position="259"/>
        <end position="289"/>
    </location>
</feature>
<feature type="repeat" description="WD 4">
    <location>
        <begin position="316"/>
        <end position="345"/>
    </location>
</feature>
<feature type="repeat" description="WD 5">
    <location>
        <begin position="357"/>
        <end position="387"/>
    </location>
</feature>
<feature type="repeat" description="WD 6">
    <location>
        <begin position="399"/>
        <end position="428"/>
    </location>
</feature>
<feature type="repeat" description="WD 7">
    <location>
        <begin position="440"/>
        <end position="470"/>
    </location>
</feature>
<feature type="repeat" description="WD 8">
    <location>
        <begin position="503"/>
        <end position="534"/>
    </location>
</feature>
<feature type="region of interest" description="Disordered" evidence="2">
    <location>
        <begin position="104"/>
        <end position="140"/>
    </location>
</feature>
<feature type="compositionally biased region" description="Acidic residues" evidence="2">
    <location>
        <begin position="130"/>
        <end position="140"/>
    </location>
</feature>
<feature type="modified residue" description="Phosphoserine" evidence="7 8">
    <location>
        <position position="137"/>
    </location>
</feature>
<feature type="sequence conflict" description="In Ref. 1; CAA55606." evidence="6" ref="1">
    <original>C</original>
    <variation>S</variation>
    <location>
        <position position="396"/>
    </location>
</feature>
<feature type="strand" evidence="9">
    <location>
        <begin position="152"/>
        <end position="156"/>
    </location>
</feature>
<feature type="strand" evidence="9">
    <location>
        <begin position="161"/>
        <end position="165"/>
    </location>
</feature>
<feature type="strand" evidence="9">
    <location>
        <begin position="172"/>
        <end position="177"/>
    </location>
</feature>
<feature type="strand" evidence="9">
    <location>
        <begin position="181"/>
        <end position="189"/>
    </location>
</feature>
<feature type="strand" evidence="9">
    <location>
        <begin position="198"/>
        <end position="207"/>
    </location>
</feature>
<feature type="strand" evidence="9">
    <location>
        <begin position="223"/>
        <end position="228"/>
    </location>
</feature>
<feature type="strand" evidence="9">
    <location>
        <begin position="232"/>
        <end position="239"/>
    </location>
</feature>
<feature type="strand" evidence="9">
    <location>
        <begin position="244"/>
        <end position="248"/>
    </location>
</feature>
<feature type="strand" evidence="9">
    <location>
        <begin position="253"/>
        <end position="257"/>
    </location>
</feature>
<feature type="strand" evidence="9">
    <location>
        <begin position="264"/>
        <end position="269"/>
    </location>
</feature>
<feature type="strand" evidence="9">
    <location>
        <begin position="273"/>
        <end position="280"/>
    </location>
</feature>
<feature type="strand" evidence="9">
    <location>
        <begin position="285"/>
        <end position="289"/>
    </location>
</feature>
<feature type="turn" evidence="9">
    <location>
        <begin position="290"/>
        <end position="293"/>
    </location>
</feature>
<feature type="strand" evidence="9">
    <location>
        <begin position="294"/>
        <end position="299"/>
    </location>
</feature>
<feature type="strand" evidence="9">
    <location>
        <begin position="325"/>
        <end position="328"/>
    </location>
</feature>
<feature type="strand" evidence="9">
    <location>
        <begin position="331"/>
        <end position="335"/>
    </location>
</feature>
<feature type="helix" evidence="9">
    <location>
        <begin position="337"/>
        <end position="339"/>
    </location>
</feature>
<feature type="strand" evidence="9">
    <location>
        <begin position="341"/>
        <end position="345"/>
    </location>
</feature>
<feature type="strand" evidence="9">
    <location>
        <begin position="352"/>
        <end position="355"/>
    </location>
</feature>
<feature type="strand" evidence="9">
    <location>
        <begin position="362"/>
        <end position="368"/>
    </location>
</feature>
<feature type="turn" evidence="9">
    <location>
        <begin position="369"/>
        <end position="372"/>
    </location>
</feature>
<feature type="strand" evidence="9">
    <location>
        <begin position="373"/>
        <end position="378"/>
    </location>
</feature>
<feature type="strand" evidence="9">
    <location>
        <begin position="383"/>
        <end position="386"/>
    </location>
</feature>
<feature type="strand" evidence="9">
    <location>
        <begin position="388"/>
        <end position="392"/>
    </location>
</feature>
<feature type="strand" evidence="9">
    <location>
        <begin position="394"/>
        <end position="397"/>
    </location>
</feature>
<feature type="strand" evidence="9">
    <location>
        <begin position="404"/>
        <end position="410"/>
    </location>
</feature>
<feature type="turn" evidence="9">
    <location>
        <begin position="411"/>
        <end position="413"/>
    </location>
</feature>
<feature type="strand" evidence="9">
    <location>
        <begin position="414"/>
        <end position="419"/>
    </location>
</feature>
<feature type="strand" evidence="9">
    <location>
        <begin position="422"/>
        <end position="428"/>
    </location>
</feature>
<feature type="turn" evidence="9">
    <location>
        <begin position="429"/>
        <end position="432"/>
    </location>
</feature>
<feature type="strand" evidence="9">
    <location>
        <begin position="433"/>
        <end position="439"/>
    </location>
</feature>
<feature type="strand" evidence="9">
    <location>
        <begin position="445"/>
        <end position="450"/>
    </location>
</feature>
<feature type="strand" evidence="9">
    <location>
        <begin position="454"/>
        <end position="461"/>
    </location>
</feature>
<feature type="strand" evidence="9">
    <location>
        <begin position="466"/>
        <end position="470"/>
    </location>
</feature>
<feature type="helix" evidence="9">
    <location>
        <begin position="472"/>
        <end position="475"/>
    </location>
</feature>
<feature type="strand" evidence="9">
    <location>
        <begin position="496"/>
        <end position="500"/>
    </location>
</feature>
<feature type="strand" evidence="9">
    <location>
        <begin position="509"/>
        <end position="514"/>
    </location>
</feature>
<feature type="strand" evidence="9">
    <location>
        <begin position="518"/>
        <end position="528"/>
    </location>
</feature>
<feature type="strand" evidence="9">
    <location>
        <begin position="531"/>
        <end position="534"/>
    </location>
</feature>
<name>SIF2_YEAST</name>